<proteinExistence type="inferred from homology"/>
<name>RS5_GLOVI</name>
<reference key="1">
    <citation type="journal article" date="2003" name="DNA Res.">
        <title>Complete genome structure of Gloeobacter violaceus PCC 7421, a cyanobacterium that lacks thylakoids.</title>
        <authorList>
            <person name="Nakamura Y."/>
            <person name="Kaneko T."/>
            <person name="Sato S."/>
            <person name="Mimuro M."/>
            <person name="Miyashita H."/>
            <person name="Tsuchiya T."/>
            <person name="Sasamoto S."/>
            <person name="Watanabe A."/>
            <person name="Kawashima K."/>
            <person name="Kishida Y."/>
            <person name="Kiyokawa C."/>
            <person name="Kohara M."/>
            <person name="Matsumoto M."/>
            <person name="Matsuno A."/>
            <person name="Nakazaki N."/>
            <person name="Shimpo S."/>
            <person name="Takeuchi C."/>
            <person name="Yamada M."/>
            <person name="Tabata S."/>
        </authorList>
    </citation>
    <scope>NUCLEOTIDE SEQUENCE [LARGE SCALE GENOMIC DNA]</scope>
    <source>
        <strain>ATCC 29082 / PCC 7421</strain>
    </source>
</reference>
<accession>Q7NEG9</accession>
<gene>
    <name evidence="1" type="primary">rpsE</name>
    <name evidence="1" type="synonym">rps5</name>
    <name type="ordered locus">gll3910</name>
</gene>
<organism>
    <name type="scientific">Gloeobacter violaceus (strain ATCC 29082 / PCC 7421)</name>
    <dbReference type="NCBI Taxonomy" id="251221"/>
    <lineage>
        <taxon>Bacteria</taxon>
        <taxon>Bacillati</taxon>
        <taxon>Cyanobacteriota</taxon>
        <taxon>Cyanophyceae</taxon>
        <taxon>Gloeobacterales</taxon>
        <taxon>Gloeobacteraceae</taxon>
        <taxon>Gloeobacter</taxon>
    </lineage>
</organism>
<sequence>MPPQQQRGRGRGRGPGGPGGPGGPGPEQAPEDPDRESGGERRRGRGRGAGRGGGDKAERAQAETEFQERVVQIRRVTKVVKGGKKLSFRAVIVVGDGNGRVGVGVGKANDVIGAVKKGVSDARKALIRVPLNKINSIPHPMSGSSGAANVFLKPASGGTGVIAGGAVRTVLELAGIKNVLAKSLGSKSPLNNARAAADALSRLRTLSEVAGERGVPVSNLWSR</sequence>
<dbReference type="EMBL" id="BA000045">
    <property type="protein sequence ID" value="BAC91851.1"/>
    <property type="molecule type" value="Genomic_DNA"/>
</dbReference>
<dbReference type="RefSeq" id="NP_926856.1">
    <property type="nucleotide sequence ID" value="NC_005125.1"/>
</dbReference>
<dbReference type="RefSeq" id="WP_011143898.1">
    <property type="nucleotide sequence ID" value="NC_005125.1"/>
</dbReference>
<dbReference type="SMR" id="Q7NEG9"/>
<dbReference type="FunCoup" id="Q7NEG9">
    <property type="interactions" value="369"/>
</dbReference>
<dbReference type="STRING" id="251221.gene:10761427"/>
<dbReference type="EnsemblBacteria" id="BAC91851">
    <property type="protein sequence ID" value="BAC91851"/>
    <property type="gene ID" value="BAC91851"/>
</dbReference>
<dbReference type="KEGG" id="gvi:gll3910"/>
<dbReference type="PATRIC" id="fig|251221.4.peg.3943"/>
<dbReference type="eggNOG" id="COG0098">
    <property type="taxonomic scope" value="Bacteria"/>
</dbReference>
<dbReference type="HOGENOM" id="CLU_065898_2_2_3"/>
<dbReference type="InParanoid" id="Q7NEG9"/>
<dbReference type="OrthoDB" id="9809045at2"/>
<dbReference type="PhylomeDB" id="Q7NEG9"/>
<dbReference type="Proteomes" id="UP000000557">
    <property type="component" value="Chromosome"/>
</dbReference>
<dbReference type="GO" id="GO:0005840">
    <property type="term" value="C:ribosome"/>
    <property type="evidence" value="ECO:0000318"/>
    <property type="project" value="GO_Central"/>
</dbReference>
<dbReference type="GO" id="GO:0015935">
    <property type="term" value="C:small ribosomal subunit"/>
    <property type="evidence" value="ECO:0007669"/>
    <property type="project" value="InterPro"/>
</dbReference>
<dbReference type="GO" id="GO:0019843">
    <property type="term" value="F:rRNA binding"/>
    <property type="evidence" value="ECO:0007669"/>
    <property type="project" value="UniProtKB-UniRule"/>
</dbReference>
<dbReference type="GO" id="GO:0003735">
    <property type="term" value="F:structural constituent of ribosome"/>
    <property type="evidence" value="ECO:0000318"/>
    <property type="project" value="GO_Central"/>
</dbReference>
<dbReference type="GO" id="GO:0006412">
    <property type="term" value="P:translation"/>
    <property type="evidence" value="ECO:0000318"/>
    <property type="project" value="GO_Central"/>
</dbReference>
<dbReference type="FunFam" id="3.30.160.20:FF:000001">
    <property type="entry name" value="30S ribosomal protein S5"/>
    <property type="match status" value="1"/>
</dbReference>
<dbReference type="FunFam" id="3.30.230.10:FF:000002">
    <property type="entry name" value="30S ribosomal protein S5"/>
    <property type="match status" value="1"/>
</dbReference>
<dbReference type="Gene3D" id="3.30.160.20">
    <property type="match status" value="1"/>
</dbReference>
<dbReference type="Gene3D" id="3.30.230.10">
    <property type="match status" value="1"/>
</dbReference>
<dbReference type="HAMAP" id="MF_01307_B">
    <property type="entry name" value="Ribosomal_uS5_B"/>
    <property type="match status" value="1"/>
</dbReference>
<dbReference type="InterPro" id="IPR020568">
    <property type="entry name" value="Ribosomal_Su5_D2-typ_SF"/>
</dbReference>
<dbReference type="InterPro" id="IPR000851">
    <property type="entry name" value="Ribosomal_uS5"/>
</dbReference>
<dbReference type="InterPro" id="IPR005712">
    <property type="entry name" value="Ribosomal_uS5_bac-type"/>
</dbReference>
<dbReference type="InterPro" id="IPR005324">
    <property type="entry name" value="Ribosomal_uS5_C"/>
</dbReference>
<dbReference type="InterPro" id="IPR013810">
    <property type="entry name" value="Ribosomal_uS5_N"/>
</dbReference>
<dbReference type="InterPro" id="IPR018192">
    <property type="entry name" value="Ribosomal_uS5_N_CS"/>
</dbReference>
<dbReference type="InterPro" id="IPR014721">
    <property type="entry name" value="Ribsml_uS5_D2-typ_fold_subgr"/>
</dbReference>
<dbReference type="NCBIfam" id="TIGR01021">
    <property type="entry name" value="rpsE_bact"/>
    <property type="match status" value="1"/>
</dbReference>
<dbReference type="PANTHER" id="PTHR48277">
    <property type="entry name" value="MITOCHONDRIAL RIBOSOMAL PROTEIN S5"/>
    <property type="match status" value="1"/>
</dbReference>
<dbReference type="PANTHER" id="PTHR48277:SF1">
    <property type="entry name" value="MITOCHONDRIAL RIBOSOMAL PROTEIN S5"/>
    <property type="match status" value="1"/>
</dbReference>
<dbReference type="Pfam" id="PF00333">
    <property type="entry name" value="Ribosomal_S5"/>
    <property type="match status" value="1"/>
</dbReference>
<dbReference type="Pfam" id="PF03719">
    <property type="entry name" value="Ribosomal_S5_C"/>
    <property type="match status" value="1"/>
</dbReference>
<dbReference type="SUPFAM" id="SSF54768">
    <property type="entry name" value="dsRNA-binding domain-like"/>
    <property type="match status" value="1"/>
</dbReference>
<dbReference type="SUPFAM" id="SSF54211">
    <property type="entry name" value="Ribosomal protein S5 domain 2-like"/>
    <property type="match status" value="1"/>
</dbReference>
<dbReference type="PROSITE" id="PS00585">
    <property type="entry name" value="RIBOSOMAL_S5"/>
    <property type="match status" value="1"/>
</dbReference>
<dbReference type="PROSITE" id="PS50881">
    <property type="entry name" value="S5_DSRBD"/>
    <property type="match status" value="1"/>
</dbReference>
<comment type="function">
    <text evidence="1">With S4 and S12 plays an important role in translational accuracy.</text>
</comment>
<comment type="function">
    <text evidence="1">Located at the back of the 30S subunit body where it stabilizes the conformation of the head with respect to the body.</text>
</comment>
<comment type="subunit">
    <text evidence="1">Part of the 30S ribosomal subunit. Contacts proteins S4 and S8.</text>
</comment>
<comment type="domain">
    <text>The N-terminal domain interacts with the head of the 30S subunit; the C-terminal domain interacts with the body and contacts protein S4. The interaction surface between S4 and S5 is involved in control of translational fidelity.</text>
</comment>
<comment type="similarity">
    <text evidence="1">Belongs to the universal ribosomal protein uS5 family.</text>
</comment>
<protein>
    <recommendedName>
        <fullName evidence="1">Small ribosomal subunit protein uS5</fullName>
    </recommendedName>
    <alternativeName>
        <fullName evidence="3">30S ribosomal protein S5</fullName>
    </alternativeName>
</protein>
<feature type="chain" id="PRO_0000131520" description="Small ribosomal subunit protein uS5">
    <location>
        <begin position="1"/>
        <end position="223"/>
    </location>
</feature>
<feature type="domain" description="S5 DRBM" evidence="1">
    <location>
        <begin position="66"/>
        <end position="129"/>
    </location>
</feature>
<feature type="region of interest" description="Disordered" evidence="2">
    <location>
        <begin position="1"/>
        <end position="66"/>
    </location>
</feature>
<feature type="compositionally biased region" description="Gly residues" evidence="2">
    <location>
        <begin position="13"/>
        <end position="22"/>
    </location>
</feature>
<feature type="compositionally biased region" description="Basic and acidic residues" evidence="2">
    <location>
        <begin position="53"/>
        <end position="66"/>
    </location>
</feature>
<evidence type="ECO:0000255" key="1">
    <source>
        <dbReference type="HAMAP-Rule" id="MF_01307"/>
    </source>
</evidence>
<evidence type="ECO:0000256" key="2">
    <source>
        <dbReference type="SAM" id="MobiDB-lite"/>
    </source>
</evidence>
<evidence type="ECO:0000305" key="3"/>
<keyword id="KW-1185">Reference proteome</keyword>
<keyword id="KW-0687">Ribonucleoprotein</keyword>
<keyword id="KW-0689">Ribosomal protein</keyword>
<keyword id="KW-0694">RNA-binding</keyword>
<keyword id="KW-0699">rRNA-binding</keyword>